<name>YAW6_SCHPO</name>
<comment type="similarity">
    <text evidence="1">To yeast RIT1.</text>
</comment>
<protein>
    <recommendedName>
        <fullName>Uncharacterized protein C3F10.06c</fullName>
    </recommendedName>
</protein>
<keyword id="KW-1185">Reference proteome</keyword>
<gene>
    <name type="ORF">SPAC3F10.06c</name>
</gene>
<accession>Q10181</accession>
<proteinExistence type="predicted"/>
<sequence length="453" mass="50850">MDEFDPLDAVQQIHVQARHPKNRLLSIAHDAKFVDSVIASYPTFKPVVNERCGTWYVNRRHAPISVYFKSTDGHTGQWSFSCRRLNLHLLNEITTCDGLIIVDSTRRGKRMPDALSKTIPIWIATLNKCVFERLRPHSFPNARLAFLPPFLPDTEKSSILQRLDGFVDSLMQSGIDLDALAAKLTKPIRPLWVTPASRLTSAQFEEYFTVVLVTASAQVQNGYSREHGFLYVQGAADDEEEWSHGLTPEVFWQNTESILTCPEEQLEQKISLLLSSTRNSPTMSNSSLTHLLPTPIFVGDVTGFYPPPENTSYFVLNLSNTTLNVKNELCFPIPSGKKGAPVFRKHFPSILQELNSLDPPFYERDAIFIVDEGNAKEAASCLALMILCLYYDLHMHLLAHPISLSASQSHLTKQTVRQFLVKITELHSKTNPSRAFLLAVNSLLLSANTIATS</sequence>
<reference key="1">
    <citation type="journal article" date="2002" name="Nature">
        <title>The genome sequence of Schizosaccharomyces pombe.</title>
        <authorList>
            <person name="Wood V."/>
            <person name="Gwilliam R."/>
            <person name="Rajandream M.A."/>
            <person name="Lyne M.H."/>
            <person name="Lyne R."/>
            <person name="Stewart A."/>
            <person name="Sgouros J.G."/>
            <person name="Peat N."/>
            <person name="Hayles J."/>
            <person name="Baker S.G."/>
            <person name="Basham D."/>
            <person name="Bowman S."/>
            <person name="Brooks K."/>
            <person name="Brown D."/>
            <person name="Brown S."/>
            <person name="Chillingworth T."/>
            <person name="Churcher C.M."/>
            <person name="Collins M."/>
            <person name="Connor R."/>
            <person name="Cronin A."/>
            <person name="Davis P."/>
            <person name="Feltwell T."/>
            <person name="Fraser A."/>
            <person name="Gentles S."/>
            <person name="Goble A."/>
            <person name="Hamlin N."/>
            <person name="Harris D.E."/>
            <person name="Hidalgo J."/>
            <person name="Hodgson G."/>
            <person name="Holroyd S."/>
            <person name="Hornsby T."/>
            <person name="Howarth S."/>
            <person name="Huckle E.J."/>
            <person name="Hunt S."/>
            <person name="Jagels K."/>
            <person name="James K.D."/>
            <person name="Jones L."/>
            <person name="Jones M."/>
            <person name="Leather S."/>
            <person name="McDonald S."/>
            <person name="McLean J."/>
            <person name="Mooney P."/>
            <person name="Moule S."/>
            <person name="Mungall K.L."/>
            <person name="Murphy L.D."/>
            <person name="Niblett D."/>
            <person name="Odell C."/>
            <person name="Oliver K."/>
            <person name="O'Neil S."/>
            <person name="Pearson D."/>
            <person name="Quail M.A."/>
            <person name="Rabbinowitsch E."/>
            <person name="Rutherford K.M."/>
            <person name="Rutter S."/>
            <person name="Saunders D."/>
            <person name="Seeger K."/>
            <person name="Sharp S."/>
            <person name="Skelton J."/>
            <person name="Simmonds M.N."/>
            <person name="Squares R."/>
            <person name="Squares S."/>
            <person name="Stevens K."/>
            <person name="Taylor K."/>
            <person name="Taylor R.G."/>
            <person name="Tivey A."/>
            <person name="Walsh S.V."/>
            <person name="Warren T."/>
            <person name="Whitehead S."/>
            <person name="Woodward J.R."/>
            <person name="Volckaert G."/>
            <person name="Aert R."/>
            <person name="Robben J."/>
            <person name="Grymonprez B."/>
            <person name="Weltjens I."/>
            <person name="Vanstreels E."/>
            <person name="Rieger M."/>
            <person name="Schaefer M."/>
            <person name="Mueller-Auer S."/>
            <person name="Gabel C."/>
            <person name="Fuchs M."/>
            <person name="Duesterhoeft A."/>
            <person name="Fritzc C."/>
            <person name="Holzer E."/>
            <person name="Moestl D."/>
            <person name="Hilbert H."/>
            <person name="Borzym K."/>
            <person name="Langer I."/>
            <person name="Beck A."/>
            <person name="Lehrach H."/>
            <person name="Reinhardt R."/>
            <person name="Pohl T.M."/>
            <person name="Eger P."/>
            <person name="Zimmermann W."/>
            <person name="Wedler H."/>
            <person name="Wambutt R."/>
            <person name="Purnelle B."/>
            <person name="Goffeau A."/>
            <person name="Cadieu E."/>
            <person name="Dreano S."/>
            <person name="Gloux S."/>
            <person name="Lelaure V."/>
            <person name="Mottier S."/>
            <person name="Galibert F."/>
            <person name="Aves S.J."/>
            <person name="Xiang Z."/>
            <person name="Hunt C."/>
            <person name="Moore K."/>
            <person name="Hurst S.M."/>
            <person name="Lucas M."/>
            <person name="Rochet M."/>
            <person name="Gaillardin C."/>
            <person name="Tallada V.A."/>
            <person name="Garzon A."/>
            <person name="Thode G."/>
            <person name="Daga R.R."/>
            <person name="Cruzado L."/>
            <person name="Jimenez J."/>
            <person name="Sanchez M."/>
            <person name="del Rey F."/>
            <person name="Benito J."/>
            <person name="Dominguez A."/>
            <person name="Revuelta J.L."/>
            <person name="Moreno S."/>
            <person name="Armstrong J."/>
            <person name="Forsburg S.L."/>
            <person name="Cerutti L."/>
            <person name="Lowe T."/>
            <person name="McCombie W.R."/>
            <person name="Paulsen I."/>
            <person name="Potashkin J."/>
            <person name="Shpakovski G.V."/>
            <person name="Ussery D."/>
            <person name="Barrell B.G."/>
            <person name="Nurse P."/>
        </authorList>
    </citation>
    <scope>NUCLEOTIDE SEQUENCE [LARGE SCALE GENOMIC DNA]</scope>
    <source>
        <strain>972 / ATCC 24843</strain>
    </source>
</reference>
<organism>
    <name type="scientific">Schizosaccharomyces pombe (strain 972 / ATCC 24843)</name>
    <name type="common">Fission yeast</name>
    <dbReference type="NCBI Taxonomy" id="284812"/>
    <lineage>
        <taxon>Eukaryota</taxon>
        <taxon>Fungi</taxon>
        <taxon>Dikarya</taxon>
        <taxon>Ascomycota</taxon>
        <taxon>Taphrinomycotina</taxon>
        <taxon>Schizosaccharomycetes</taxon>
        <taxon>Schizosaccharomycetales</taxon>
        <taxon>Schizosaccharomycetaceae</taxon>
        <taxon>Schizosaccharomyces</taxon>
    </lineage>
</organism>
<evidence type="ECO:0000305" key="1"/>
<feature type="chain" id="PRO_0000116478" description="Uncharacterized protein C3F10.06c">
    <location>
        <begin position="1"/>
        <end position="453"/>
    </location>
</feature>
<dbReference type="EMBL" id="CU329670">
    <property type="protein sequence ID" value="CAA93304.1"/>
    <property type="molecule type" value="Genomic_DNA"/>
</dbReference>
<dbReference type="PIR" id="T38707">
    <property type="entry name" value="T38707"/>
</dbReference>
<dbReference type="BioGRID" id="279560">
    <property type="interactions" value="7"/>
</dbReference>
<dbReference type="FunCoup" id="Q10181">
    <property type="interactions" value="27"/>
</dbReference>
<dbReference type="STRING" id="284812.Q10181"/>
<dbReference type="PaxDb" id="4896-SPAC3F10.06c.1"/>
<dbReference type="EnsemblFungi" id="SPAC3F10.06c.1">
    <property type="protein sequence ID" value="SPAC3F10.06c.1:pep"/>
    <property type="gene ID" value="SPAC3F10.06c"/>
</dbReference>
<dbReference type="KEGG" id="spo:2543128"/>
<dbReference type="PomBase" id="SPAC3F10.06c"/>
<dbReference type="VEuPathDB" id="FungiDB:SPAC3F10.06c"/>
<dbReference type="eggNOG" id="KOG2634">
    <property type="taxonomic scope" value="Eukaryota"/>
</dbReference>
<dbReference type="HOGENOM" id="CLU_027654_1_1_1"/>
<dbReference type="InParanoid" id="Q10181"/>
<dbReference type="OMA" id="IATLNKC"/>
<dbReference type="PhylomeDB" id="Q10181"/>
<dbReference type="PRO" id="PR:Q10181"/>
<dbReference type="Proteomes" id="UP000002485">
    <property type="component" value="Chromosome I"/>
</dbReference>
<dbReference type="GO" id="GO:0005829">
    <property type="term" value="C:cytosol"/>
    <property type="evidence" value="ECO:0007005"/>
    <property type="project" value="PomBase"/>
</dbReference>
<dbReference type="GO" id="GO:0005634">
    <property type="term" value="C:nucleus"/>
    <property type="evidence" value="ECO:0007005"/>
    <property type="project" value="PomBase"/>
</dbReference>
<dbReference type="GO" id="GO:0016763">
    <property type="term" value="F:pentosyltransferase activity"/>
    <property type="evidence" value="ECO:0000318"/>
    <property type="project" value="GO_Central"/>
</dbReference>
<dbReference type="GO" id="GO:0043399">
    <property type="term" value="F:tRNA adenosine(64)-2'-O-ribosylphosphate transferase activity"/>
    <property type="evidence" value="ECO:0000266"/>
    <property type="project" value="PomBase"/>
</dbReference>
<dbReference type="GO" id="GO:0019988">
    <property type="term" value="P:charged-tRNA amino acid modification"/>
    <property type="evidence" value="ECO:0000318"/>
    <property type="project" value="GO_Central"/>
</dbReference>
<dbReference type="InterPro" id="IPR007306">
    <property type="entry name" value="Rit1"/>
</dbReference>
<dbReference type="InterPro" id="IPR033421">
    <property type="entry name" value="Rit1_DUSP-like"/>
</dbReference>
<dbReference type="InterPro" id="IPR033449">
    <property type="entry name" value="Rit1_N"/>
</dbReference>
<dbReference type="PANTHER" id="PTHR31811">
    <property type="entry name" value="TRNA A64-2'-O-RIBOSYLPHOSPHATE TRANSFERASE"/>
    <property type="match status" value="1"/>
</dbReference>
<dbReference type="PANTHER" id="PTHR31811:SF0">
    <property type="entry name" value="TRNA A64-2'-O-RIBOSYLPHOSPHATE TRANSFERASE"/>
    <property type="match status" value="1"/>
</dbReference>
<dbReference type="Pfam" id="PF04179">
    <property type="entry name" value="Init_tRNA_PT"/>
    <property type="match status" value="1"/>
</dbReference>
<dbReference type="Pfam" id="PF17184">
    <property type="entry name" value="Rit1_C"/>
    <property type="match status" value="1"/>
</dbReference>
<dbReference type="PIRSF" id="PIRSF007747">
    <property type="entry name" value="Ribosyl_Ptfrase"/>
    <property type="match status" value="1"/>
</dbReference>